<name>LIGD_PSEAE</name>
<keyword id="KW-0002">3D-structure</keyword>
<keyword id="KW-0067">ATP-binding</keyword>
<keyword id="KW-0227">DNA damage</keyword>
<keyword id="KW-0233">DNA recombination</keyword>
<keyword id="KW-0234">DNA repair</keyword>
<keyword id="KW-0238">DNA-binding</keyword>
<keyword id="KW-0239">DNA-directed DNA polymerase</keyword>
<keyword id="KW-0269">Exonuclease</keyword>
<keyword id="KW-0378">Hydrolase</keyword>
<keyword id="KW-0436">Ligase</keyword>
<keyword id="KW-0464">Manganese</keyword>
<keyword id="KW-0479">Metal-binding</keyword>
<keyword id="KW-0511">Multifunctional enzyme</keyword>
<keyword id="KW-0540">Nuclease</keyword>
<keyword id="KW-0547">Nucleotide-binding</keyword>
<keyword id="KW-0548">Nucleotidyltransferase</keyword>
<keyword id="KW-1185">Reference proteome</keyword>
<keyword id="KW-0808">Transferase</keyword>
<protein>
    <recommendedName>
        <fullName>Multifunctional non-homologous end joining protein LigD</fullName>
    </recommendedName>
    <alternativeName>
        <fullName>NHEJ DNA polymerase</fullName>
    </alternativeName>
    <domain>
        <recommendedName>
            <fullName>3'-phosphoesterase</fullName>
            <shortName>3'-ribonuclease/3'-phosphatase</shortName>
        </recommendedName>
    </domain>
    <domain>
        <recommendedName>
            <fullName>DNA ligase D</fullName>
            <shortName>LigD</shortName>
            <ecNumber>6.5.1.1</ecNumber>
        </recommendedName>
        <alternativeName>
            <fullName>Polydeoxyribonucleotide synthase [ATP]</fullName>
        </alternativeName>
    </domain>
    <domain>
        <recommendedName>
            <fullName>DNA repair polymerase</fullName>
            <shortName>Pol</shortName>
        </recommendedName>
        <alternativeName>
            <fullName>Polymerase/primase</fullName>
        </alternativeName>
    </domain>
</protein>
<accession>Q9I1X7</accession>
<organism>
    <name type="scientific">Pseudomonas aeruginosa (strain ATCC 15692 / DSM 22644 / CIP 104116 / JCM 14847 / LMG 12228 / 1C / PRS 101 / PAO1)</name>
    <dbReference type="NCBI Taxonomy" id="208964"/>
    <lineage>
        <taxon>Bacteria</taxon>
        <taxon>Pseudomonadati</taxon>
        <taxon>Pseudomonadota</taxon>
        <taxon>Gammaproteobacteria</taxon>
        <taxon>Pseudomonadales</taxon>
        <taxon>Pseudomonadaceae</taxon>
        <taxon>Pseudomonas</taxon>
    </lineage>
</organism>
<proteinExistence type="evidence at protein level"/>
<reference key="1">
    <citation type="journal article" date="2000" name="Nature">
        <title>Complete genome sequence of Pseudomonas aeruginosa PAO1, an opportunistic pathogen.</title>
        <authorList>
            <person name="Stover C.K."/>
            <person name="Pham X.-Q.T."/>
            <person name="Erwin A.L."/>
            <person name="Mizoguchi S.D."/>
            <person name="Warrener P."/>
            <person name="Hickey M.J."/>
            <person name="Brinkman F.S.L."/>
            <person name="Hufnagle W.O."/>
            <person name="Kowalik D.J."/>
            <person name="Lagrou M."/>
            <person name="Garber R.L."/>
            <person name="Goltry L."/>
            <person name="Tolentino E."/>
            <person name="Westbrock-Wadman S."/>
            <person name="Yuan Y."/>
            <person name="Brody L.L."/>
            <person name="Coulter S.N."/>
            <person name="Folger K.R."/>
            <person name="Kas A."/>
            <person name="Larbig K."/>
            <person name="Lim R.M."/>
            <person name="Smith K.A."/>
            <person name="Spencer D.H."/>
            <person name="Wong G.K.-S."/>
            <person name="Wu Z."/>
            <person name="Paulsen I.T."/>
            <person name="Reizer J."/>
            <person name="Saier M.H. Jr."/>
            <person name="Hancock R.E.W."/>
            <person name="Lory S."/>
            <person name="Olson M.V."/>
        </authorList>
    </citation>
    <scope>NUCLEOTIDE SEQUENCE [LARGE SCALE GENOMIC DNA]</scope>
    <source>
        <strain>ATCC 15692 / DSM 22644 / CIP 104116 / JCM 14847 / LMG 12228 / 1C / PRS 101 / PAO1</strain>
    </source>
</reference>
<reference key="2">
    <citation type="journal article" date="2005" name="J. Biol. Chem.">
        <title>A primer-dependent polymerase function of pseudomonas aeruginosa ATP-dependent DNA ligase (LigD).</title>
        <authorList>
            <person name="Zhu H."/>
            <person name="Shuman S."/>
        </authorList>
    </citation>
    <scope>FUNCTION AS A LIGASE</scope>
    <scope>FUNCTION AS A DNA POLYMERASE</scope>
    <scope>COFACTOR</scope>
    <scope>SUBUNIT</scope>
    <scope>DOMAIN</scope>
    <scope>MUTAGENESIS OF 669-ASP--ASP-671</scope>
</reference>
<reference key="3">
    <citation type="journal article" date="2005" name="J. Biol. Chem.">
        <title>Novel 3'-ribonuclease and 3'-phosphatase activities of the bacterial non-homologous end-joining protein, DNA ligase D.</title>
        <authorList>
            <person name="Zhu H."/>
            <person name="Shuman S."/>
        </authorList>
    </citation>
    <scope>FUNCTION IN RESECTION</scope>
    <scope>COFACTOR</scope>
    <scope>DOMAIN</scope>
    <scope>MUTAGENESIS OF ASP-50; ARG-52; GLU-54; GLU-82 AND HIS-84</scope>
</reference>
<reference key="4">
    <citation type="journal article" date="2005" name="J. Biol. Chem.">
        <title>Essential constituents of the 3'-phosphoesterase domain of bacterial DNA ligase D, a nonhomologous end-joining enzyme.</title>
        <authorList>
            <person name="Zhu H."/>
            <person name="Wang L.K."/>
            <person name="Shuman S."/>
        </authorList>
    </citation>
    <scope>FUNCTION</scope>
    <scope>COFACTOR</scope>
    <scope>DOMAIN</scope>
    <scope>MUTAGENESIS OF ARG-14; ASP-15; GLU-21; GLN-40; HIS-42; ARG-46; HIS-48; LYS-66; ARG-76; ASP-83 AND TYR-88</scope>
</reference>
<reference key="5">
    <citation type="journal article" date="2010" name="J. Biol. Chem.">
        <title>Gap filling activities of Pseudomonas DNA ligase D (LigD) polymerase and functional interactions of LigD with the DNA end-binding Ku protein.</title>
        <authorList>
            <person name="Zhu H."/>
            <person name="Shuman S."/>
        </authorList>
    </citation>
    <scope>FUNCTION IN GAP-FILLING</scope>
    <scope>ACTIVITY REGULATION</scope>
    <scope>MUTAGENESIS OF HIS-553; 553-HIS--LYS-566; ARG-556; LYS-566 AND PHE-603</scope>
</reference>
<reference key="6">
    <citation type="journal article" date="2006" name="Proc. Natl. Acad. Sci. U.S.A.">
        <title>Atomic structure and nonhomologous end-joining function of the polymerase component of bacterial DNA ligase D.</title>
        <authorList>
            <person name="Zhu H."/>
            <person name="Nandakumar J."/>
            <person name="Aniukwu J."/>
            <person name="Wang L.K."/>
            <person name="Glickman M.S."/>
            <person name="Lima C.D."/>
            <person name="Shuman S."/>
        </authorList>
    </citation>
    <scope>X-RAY CRYSTALLOGRAPHY (1.50 ANGSTROMS) OF 533-840 OF APOENZYME AND IN COMPLEX WITH ATP AND MANGANESE</scope>
    <scope>COFACTOR</scope>
    <scope>ATP-BINDING</scope>
    <scope>MUTAGENESIS OF PHE-604; ASP-669; ASP-671; HIS-710; ARG-752; ASP-759; ARG-776 AND ARG-778</scope>
</reference>
<reference key="7">
    <citation type="journal article" date="2010" name="Proc. Natl. Acad. Sci. U.S.A.">
        <title>Structure of bacterial LigD 3'-phosphoesterase unveils a DNA repair superfamily.</title>
        <authorList>
            <person name="Nair P.A."/>
            <person name="Smith P."/>
            <person name="Shuman S."/>
        </authorList>
    </citation>
    <scope>X-RAY CRYSTALLOGRAPHY (1.92 ANGSTROMS) OF 17-187 IN COMPLEX WITH MANGANESE</scope>
    <scope>FUNCTION</scope>
    <scope>REACTION MECHANISM</scope>
</reference>
<reference key="8">
    <citation type="journal article" date="2012" name="Nucleic Acids Res.">
        <title>Solution structure and DNA-binding properties of the phosphoesterase domain of DNA ligase D.</title>
        <authorList>
            <person name="Natarajan A."/>
            <person name="Dutta K."/>
            <person name="Temel D.B."/>
            <person name="Nair P.A."/>
            <person name="Shuman S."/>
            <person name="Ghose R."/>
        </authorList>
    </citation>
    <scope>STRUCTURE BY NMR OF 1-177</scope>
    <scope>DNA-BINDING</scope>
</reference>
<gene>
    <name type="primary">ligD</name>
    <name type="ordered locus">PA2138</name>
</gene>
<dbReference type="EC" id="6.5.1.1"/>
<dbReference type="EMBL" id="AE004091">
    <property type="protein sequence ID" value="AAG05526.1"/>
    <property type="molecule type" value="Genomic_DNA"/>
</dbReference>
<dbReference type="PIR" id="C83378">
    <property type="entry name" value="C83378"/>
</dbReference>
<dbReference type="RefSeq" id="NP_250828.1">
    <property type="nucleotide sequence ID" value="NC_002516.2"/>
</dbReference>
<dbReference type="RefSeq" id="WP_003113639.1">
    <property type="nucleotide sequence ID" value="NZ_QZGE01000014.1"/>
</dbReference>
<dbReference type="PDB" id="2FAO">
    <property type="method" value="X-ray"/>
    <property type="resolution" value="1.50 A"/>
    <property type="chains" value="A/B=533-840"/>
</dbReference>
<dbReference type="PDB" id="2FAQ">
    <property type="method" value="X-ray"/>
    <property type="resolution" value="1.90 A"/>
    <property type="chains" value="A/B=533-840"/>
</dbReference>
<dbReference type="PDB" id="2FAR">
    <property type="method" value="X-ray"/>
    <property type="resolution" value="1.90 A"/>
    <property type="chains" value="A/B=533-840"/>
</dbReference>
<dbReference type="PDB" id="2LJ6">
    <property type="method" value="NMR"/>
    <property type="chains" value="A=1-177"/>
</dbReference>
<dbReference type="PDB" id="3N9B">
    <property type="method" value="X-ray"/>
    <property type="resolution" value="1.92 A"/>
    <property type="chains" value="A/B=17-187"/>
</dbReference>
<dbReference type="PDB" id="3N9D">
    <property type="method" value="X-ray"/>
    <property type="resolution" value="2.30 A"/>
    <property type="chains" value="A=17-187"/>
</dbReference>
<dbReference type="PDBsum" id="2FAO"/>
<dbReference type="PDBsum" id="2FAQ"/>
<dbReference type="PDBsum" id="2FAR"/>
<dbReference type="PDBsum" id="2LJ6"/>
<dbReference type="PDBsum" id="3N9B"/>
<dbReference type="PDBsum" id="3N9D"/>
<dbReference type="BMRB" id="Q9I1X7"/>
<dbReference type="SMR" id="Q9I1X7"/>
<dbReference type="STRING" id="208964.PA2138"/>
<dbReference type="PaxDb" id="208964-PA2138"/>
<dbReference type="GeneID" id="880451"/>
<dbReference type="KEGG" id="pae:PA2138"/>
<dbReference type="PATRIC" id="fig|208964.12.peg.2235"/>
<dbReference type="PseudoCAP" id="PA2138"/>
<dbReference type="HOGENOM" id="CLU_008325_0_0_6"/>
<dbReference type="InParanoid" id="Q9I1X7"/>
<dbReference type="OrthoDB" id="9802472at2"/>
<dbReference type="PhylomeDB" id="Q9I1X7"/>
<dbReference type="BioCyc" id="PAER208964:G1FZ6-2177-MONOMER"/>
<dbReference type="EvolutionaryTrace" id="Q9I1X7"/>
<dbReference type="Proteomes" id="UP000002438">
    <property type="component" value="Chromosome"/>
</dbReference>
<dbReference type="GO" id="GO:0005524">
    <property type="term" value="F:ATP binding"/>
    <property type="evidence" value="ECO:0007669"/>
    <property type="project" value="UniProtKB-KW"/>
</dbReference>
<dbReference type="GO" id="GO:0003677">
    <property type="term" value="F:DNA binding"/>
    <property type="evidence" value="ECO:0007669"/>
    <property type="project" value="UniProtKB-KW"/>
</dbReference>
<dbReference type="GO" id="GO:0003910">
    <property type="term" value="F:DNA ligase (ATP) activity"/>
    <property type="evidence" value="ECO:0000314"/>
    <property type="project" value="UniProtKB"/>
</dbReference>
<dbReference type="GO" id="GO:0003887">
    <property type="term" value="F:DNA-directed DNA polymerase activity"/>
    <property type="evidence" value="ECO:0000314"/>
    <property type="project" value="UniProtKB"/>
</dbReference>
<dbReference type="GO" id="GO:0046872">
    <property type="term" value="F:metal ion binding"/>
    <property type="evidence" value="ECO:0007669"/>
    <property type="project" value="UniProtKB-KW"/>
</dbReference>
<dbReference type="GO" id="GO:0016779">
    <property type="term" value="F:nucleotidyltransferase activity"/>
    <property type="evidence" value="ECO:0000314"/>
    <property type="project" value="UniProtKB"/>
</dbReference>
<dbReference type="GO" id="GO:0004532">
    <property type="term" value="F:RNA exonuclease activity"/>
    <property type="evidence" value="ECO:0000314"/>
    <property type="project" value="UniProtKB"/>
</dbReference>
<dbReference type="GO" id="GO:0071897">
    <property type="term" value="P:DNA biosynthetic process"/>
    <property type="evidence" value="ECO:0000314"/>
    <property type="project" value="PseudoCAP"/>
</dbReference>
<dbReference type="GO" id="GO:0006310">
    <property type="term" value="P:DNA recombination"/>
    <property type="evidence" value="ECO:0007669"/>
    <property type="project" value="UniProtKB-KW"/>
</dbReference>
<dbReference type="GO" id="GO:0006281">
    <property type="term" value="P:DNA repair"/>
    <property type="evidence" value="ECO:0007669"/>
    <property type="project" value="UniProtKB-KW"/>
</dbReference>
<dbReference type="CDD" id="cd07906">
    <property type="entry name" value="Adenylation_DNA_ligase_LigD_LigC"/>
    <property type="match status" value="1"/>
</dbReference>
<dbReference type="CDD" id="cd07971">
    <property type="entry name" value="OBF_DNA_ligase_LigD"/>
    <property type="match status" value="1"/>
</dbReference>
<dbReference type="CDD" id="cd04862">
    <property type="entry name" value="PaeLigD_Pol_like"/>
    <property type="match status" value="1"/>
</dbReference>
<dbReference type="DisProt" id="DP01670"/>
<dbReference type="Gene3D" id="3.30.1490.70">
    <property type="match status" value="1"/>
</dbReference>
<dbReference type="Gene3D" id="3.30.470.30">
    <property type="entry name" value="DNA ligase/mRNA capping enzyme"/>
    <property type="match status" value="1"/>
</dbReference>
<dbReference type="Gene3D" id="3.90.920.10">
    <property type="entry name" value="DNA primase, PRIM domain"/>
    <property type="match status" value="1"/>
</dbReference>
<dbReference type="Gene3D" id="2.40.50.140">
    <property type="entry name" value="Nucleic acid-binding proteins"/>
    <property type="match status" value="1"/>
</dbReference>
<dbReference type="InterPro" id="IPR012309">
    <property type="entry name" value="DNA_ligase_ATP-dep_C"/>
</dbReference>
<dbReference type="InterPro" id="IPR012310">
    <property type="entry name" value="DNA_ligase_ATP-dep_cent"/>
</dbReference>
<dbReference type="InterPro" id="IPR014146">
    <property type="entry name" value="LigD_ligase_dom"/>
</dbReference>
<dbReference type="InterPro" id="IPR014144">
    <property type="entry name" value="LigD_PE_domain"/>
</dbReference>
<dbReference type="InterPro" id="IPR014145">
    <property type="entry name" value="LigD_pol_dom"/>
</dbReference>
<dbReference type="InterPro" id="IPR012340">
    <property type="entry name" value="NA-bd_OB-fold"/>
</dbReference>
<dbReference type="InterPro" id="IPR014143">
    <property type="entry name" value="NHEJ_ligase_prk"/>
</dbReference>
<dbReference type="InterPro" id="IPR052171">
    <property type="entry name" value="NHEJ_LigD"/>
</dbReference>
<dbReference type="InterPro" id="IPR033651">
    <property type="entry name" value="PaeLigD_Pol-like"/>
</dbReference>
<dbReference type="NCBIfam" id="TIGR02777">
    <property type="entry name" value="LigD_PE_dom"/>
    <property type="match status" value="1"/>
</dbReference>
<dbReference type="NCBIfam" id="TIGR02778">
    <property type="entry name" value="ligD_pol"/>
    <property type="match status" value="1"/>
</dbReference>
<dbReference type="NCBIfam" id="TIGR02779">
    <property type="entry name" value="NHEJ_ligase_lig"/>
    <property type="match status" value="1"/>
</dbReference>
<dbReference type="NCBIfam" id="TIGR02776">
    <property type="entry name" value="NHEJ_ligase_prk"/>
    <property type="match status" value="1"/>
</dbReference>
<dbReference type="NCBIfam" id="NF004628">
    <property type="entry name" value="PRK05972.1"/>
    <property type="match status" value="1"/>
</dbReference>
<dbReference type="PANTHER" id="PTHR42705">
    <property type="entry name" value="BIFUNCTIONAL NON-HOMOLOGOUS END JOINING PROTEIN LIGD"/>
    <property type="match status" value="1"/>
</dbReference>
<dbReference type="PANTHER" id="PTHR42705:SF2">
    <property type="entry name" value="BIFUNCTIONAL NON-HOMOLOGOUS END JOINING PROTEIN LIGD"/>
    <property type="match status" value="1"/>
</dbReference>
<dbReference type="Pfam" id="PF04679">
    <property type="entry name" value="DNA_ligase_A_C"/>
    <property type="match status" value="1"/>
</dbReference>
<dbReference type="Pfam" id="PF01068">
    <property type="entry name" value="DNA_ligase_A_M"/>
    <property type="match status" value="1"/>
</dbReference>
<dbReference type="Pfam" id="PF13298">
    <property type="entry name" value="LigD_N"/>
    <property type="match status" value="1"/>
</dbReference>
<dbReference type="Pfam" id="PF21686">
    <property type="entry name" value="LigD_Prim-Pol"/>
    <property type="match status" value="1"/>
</dbReference>
<dbReference type="SUPFAM" id="SSF56091">
    <property type="entry name" value="DNA ligase/mRNA capping enzyme, catalytic domain"/>
    <property type="match status" value="1"/>
</dbReference>
<dbReference type="SUPFAM" id="SSF50249">
    <property type="entry name" value="Nucleic acid-binding proteins"/>
    <property type="match status" value="1"/>
</dbReference>
<dbReference type="PROSITE" id="PS50160">
    <property type="entry name" value="DNA_LIGASE_A3"/>
    <property type="match status" value="1"/>
</dbReference>
<evidence type="ECO:0000250" key="1"/>
<evidence type="ECO:0000256" key="2">
    <source>
        <dbReference type="SAM" id="MobiDB-lite"/>
    </source>
</evidence>
<evidence type="ECO:0000269" key="3">
    <source>
    </source>
</evidence>
<evidence type="ECO:0000269" key="4">
    <source>
    </source>
</evidence>
<evidence type="ECO:0000269" key="5">
    <source>
    </source>
</evidence>
<evidence type="ECO:0000269" key="6">
    <source>
    </source>
</evidence>
<evidence type="ECO:0000269" key="7">
    <source>
    </source>
</evidence>
<evidence type="ECO:0000269" key="8">
    <source>
    </source>
</evidence>
<evidence type="ECO:0000305" key="9"/>
<evidence type="ECO:0000305" key="10">
    <source>
    </source>
</evidence>
<evidence type="ECO:0000305" key="11">
    <source>
    </source>
</evidence>
<evidence type="ECO:0000305" key="12">
    <source>
    </source>
</evidence>
<evidence type="ECO:0000305" key="13">
    <source>
    </source>
</evidence>
<evidence type="ECO:0007829" key="14">
    <source>
        <dbReference type="PDB" id="2FAO"/>
    </source>
</evidence>
<evidence type="ECO:0007829" key="15">
    <source>
        <dbReference type="PDB" id="2LJ6"/>
    </source>
</evidence>
<evidence type="ECO:0007829" key="16">
    <source>
        <dbReference type="PDB" id="3N9B"/>
    </source>
</evidence>
<sequence>MPSSKPLAEYARKRDFRQTPEPSGRKPRKDSTGLLRYCVQKHDASRLHYDFRLELDGTLKSWAVPKGPCLDPAVKRLAVQVEDHPLDYADFEGSIPQGHYGAGDVIVWDRGAWTPLDDPREGLEKGHLSFALDGEKLSGRWHLIRTNLRGKQSQWFLVKAKDGEARSLDRFDVLKERPDSVLSERTLLPRHGEAATPAARPARRGKSGGKTPMPEWIAPELASLVEQPPRGEWAYELKLDGYRLMSRIEDGHVRLLTRNGHDWTERLPHLEKALAGLGLQRSWLDGELVVLDEEGRPDFQALQNAFEEGRGENILYVLFDLPYHEGEDLRDVALEERRARLEALLEGRDEDPLRFSATLAEDPRDLLASACKLGLEGVIGKRLGSAYRSRRSNDWIKLKCQLRQEFVIVGYTEPKGSRRHIGALLLGLYSPDEERRLRYAGKVGSGFTAASLKKVRERLEPLAVRSSPLAKVPPARETGSVQWVRPQQLCEVSYAQMTRGGIIRQAVFHGLREDKPAREVTGERPAGPPPLRGARKASAGASRAATAGVRISHPQRLIDPSIQASKLELAEFHARYADLLLRDLRERPVSLVRGPDGIGGELFFQKHAARLKIPGIVQLDPALDPGHPPLLQIRSAEALVGAVQMGSIEFHTWNASLANLERPDRFVLDLDPDPALPWKRMLEATQLSLTLLDELGLRAFLKTSGGKGMHLLVPLERRHGWDEVKDFAQAISQHLARLMPERFSAVSGPRNRVGKIFVDYLRNSRGASTVAAYSVRAREGLPVSVPVFREELDSLQGANQWNLRSLPQRLDELAGDDPWADYAGTRQRISAAMRRQLGRG</sequence>
<comment type="function">
    <text evidence="4 5 7">With Ku probably forms a non-homologous end joining (NHEJ) repair enzyme, which repairs dsDNA breaks (DSB) with reduced fidelity. Acts as a DNA ligase on singly nicked dsDNA, fills dsDNA gaps (3- or 4- nucleotide gaps, prefers a 5'-phosphate at the gap distal end, prefers dNTPs over rNTPs) (PubMed:20018881), has DNA-directed DNA polymerase activity (templated primer extension) and DNA-directed RNA polymerase activity (PubMed:15897197), adds 1 or 2 non-templated rNTP (or less well dNTP) to ssDNA or blunt-end dsDNA (primer extension). Has 3' resection activity, removing 3'-rNMPs from DNA using its 3'-ribonuclease and 3'-phosphatase activities sequentially. Resection requires a 2'-OH in the penultimate nucleoside position (i.e. a ribo- not deoxyribonucleoside) (PubMed:15897197), although the 3'-phosphatase activity does not, and its specific activity is 16-fold higher on a DNA substrate (PubMed:16046407). On appropriate substrates will extend a DNA primer to the end of the template strand and then incorporate a non-templated nucleotide.</text>
</comment>
<comment type="function">
    <text>The preference of the polymerase domain for rNTPs over dNTPs may be advantageous in quiescent cells where the dNTP pool may be limiting.</text>
</comment>
<comment type="catalytic activity">
    <reaction>
        <text>ATP + (deoxyribonucleotide)n-3'-hydroxyl + 5'-phospho-(deoxyribonucleotide)m = (deoxyribonucleotide)n+m + AMP + diphosphate.</text>
        <dbReference type="EC" id="6.5.1.1"/>
    </reaction>
</comment>
<comment type="cofactor">
    <cofactor evidence="10 11 12 13">
        <name>Mn(2+)</name>
        <dbReference type="ChEBI" id="CHEBI:29035"/>
    </cofactor>
    <text evidence="10 11 12 13">Binds 4 Mn(2+); 2 Mn(2+) for polymerase/primase activity, 1 each for 3-phosphoesterase and ligase.</text>
</comment>
<comment type="activity regulation">
    <text evidence="7">rNTP addition and end joining activities are stimulated by Ku homodimer.</text>
</comment>
<comment type="subunit">
    <text evidence="1">Monomer. Interacts with Ku (By similarity).</text>
</comment>
<comment type="domain">
    <text evidence="4">The N-terminal 3'-phosphoesterase domain (PE) has 3'-ribonuclease and 3'-phosphatase activities.</text>
</comment>
<comment type="domain">
    <text evidence="3">The central ATP-dependent ligase domain (Lig) functions as an independent domain.</text>
</comment>
<comment type="domain">
    <text evidence="3 4">The C-terminal polymerase/primase domain (Pol) (PubMed:15520014) adds up to 4 rNTPs in a DNA template-directed fashion (PubMed:15897197).</text>
</comment>
<comment type="miscellaneous">
    <text>LigD has variable architecture; domain order can be permutated, domains can be independently encoded, while some bacteria lack the 3'-phosphoesterase domain entirely.</text>
</comment>
<comment type="similarity">
    <text evidence="9">In the N-terminal section; belongs to the LigD 3'-phosphoesterase family.</text>
</comment>
<comment type="similarity">
    <text evidence="9">In the central section; belongs to the ATP-dependent DNA ligase family.</text>
</comment>
<comment type="similarity">
    <text evidence="9">In the C-terminal section; belongs to the LigD polymerase family.</text>
</comment>
<feature type="chain" id="PRO_0000425950" description="Multifunctional non-homologous end joining protein LigD">
    <location>
        <begin position="1"/>
        <end position="840"/>
    </location>
</feature>
<feature type="region of interest" description="Disordered" evidence="2">
    <location>
        <begin position="1"/>
        <end position="32"/>
    </location>
</feature>
<feature type="region of interest" description="3'-phosphoesterase domain (PE)">
    <location>
        <begin position="7"/>
        <end position="162"/>
    </location>
</feature>
<feature type="region of interest" description="Disordered" evidence="2">
    <location>
        <begin position="189"/>
        <end position="211"/>
    </location>
</feature>
<feature type="region of interest" description="Ligase domain (Lig)">
    <location>
        <begin position="219"/>
        <end position="521"/>
    </location>
</feature>
<feature type="region of interest" description="Disordered" evidence="2">
    <location>
        <begin position="514"/>
        <end position="546"/>
    </location>
</feature>
<feature type="region of interest" description="DNA repair polymerase domain (Pol)">
    <location>
        <begin position="549"/>
        <end position="793"/>
    </location>
</feature>
<feature type="compositionally biased region" description="Low complexity" evidence="2">
    <location>
        <begin position="536"/>
        <end position="546"/>
    </location>
</feature>
<feature type="active site" description="N6-AMP-lysine intermediate" evidence="9">
    <location>
        <position position="238"/>
    </location>
</feature>
<feature type="binding site" evidence="6 8">
    <location>
        <position position="42"/>
    </location>
    <ligand>
        <name>Mn(2+)</name>
        <dbReference type="ChEBI" id="CHEBI:29035"/>
        <label>1</label>
        <note>catalytic; for 3'-phosphoesterase activity</note>
    </ligand>
</feature>
<feature type="binding site" evidence="6 8">
    <location>
        <position position="48"/>
    </location>
    <ligand>
        <name>Mn(2+)</name>
        <dbReference type="ChEBI" id="CHEBI:29035"/>
        <label>1</label>
        <note>catalytic; for 3'-phosphoesterase activity</note>
    </ligand>
</feature>
<feature type="binding site" evidence="6 8">
    <location>
        <position position="50"/>
    </location>
    <ligand>
        <name>Mn(2+)</name>
        <dbReference type="ChEBI" id="CHEBI:29035"/>
        <label>1</label>
        <note>catalytic; for 3'-phosphoesterase activity</note>
    </ligand>
</feature>
<feature type="binding site" evidence="1">
    <location>
        <position position="240"/>
    </location>
    <ligand>
        <name>Mn(2+)</name>
        <dbReference type="ChEBI" id="CHEBI:29035"/>
        <label>2</label>
    </ligand>
</feature>
<feature type="binding site" evidence="1">
    <location>
        <position position="376"/>
    </location>
    <ligand>
        <name>Mn(2+)</name>
        <dbReference type="ChEBI" id="CHEBI:29035"/>
        <label>2</label>
    </ligand>
</feature>
<feature type="binding site" evidence="6">
    <location>
        <position position="604"/>
    </location>
    <ligand>
        <name>ATP</name>
        <dbReference type="ChEBI" id="CHEBI:30616"/>
    </ligand>
</feature>
<feature type="binding site" evidence="6">
    <location>
        <position position="651"/>
    </location>
    <ligand>
        <name>ATP</name>
        <dbReference type="ChEBI" id="CHEBI:30616"/>
    </ligand>
</feature>
<feature type="binding site" evidence="6 8">
    <location>
        <position position="669"/>
    </location>
    <ligand>
        <name>Mn(2+)</name>
        <dbReference type="ChEBI" id="CHEBI:29035"/>
        <label>3</label>
    </ligand>
</feature>
<feature type="binding site" evidence="6 8">
    <location>
        <position position="669"/>
    </location>
    <ligand>
        <name>Mn(2+)</name>
        <dbReference type="ChEBI" id="CHEBI:29035"/>
        <label>4</label>
    </ligand>
</feature>
<feature type="binding site" evidence="6">
    <location>
        <position position="671"/>
    </location>
    <ligand>
        <name>ATP</name>
        <dbReference type="ChEBI" id="CHEBI:30616"/>
    </ligand>
</feature>
<feature type="binding site" evidence="6 8">
    <location>
        <position position="671"/>
    </location>
    <ligand>
        <name>Mn(2+)</name>
        <dbReference type="ChEBI" id="CHEBI:29035"/>
        <label>3</label>
    </ligand>
</feature>
<feature type="binding site" evidence="6">
    <location>
        <begin position="704"/>
        <end position="710"/>
    </location>
    <ligand>
        <name>ATP</name>
        <dbReference type="ChEBI" id="CHEBI:30616"/>
    </ligand>
</feature>
<feature type="binding site" evidence="6 8">
    <location>
        <position position="759"/>
    </location>
    <ligand>
        <name>Mn(2+)</name>
        <dbReference type="ChEBI" id="CHEBI:29035"/>
        <label>4</label>
    </ligand>
</feature>
<feature type="binding site" evidence="6">
    <location>
        <position position="768"/>
    </location>
    <ligand>
        <name>ATP</name>
        <dbReference type="ChEBI" id="CHEBI:30616"/>
    </ligand>
</feature>
<feature type="binding site" evidence="6">
    <location>
        <begin position="776"/>
        <end position="778"/>
    </location>
    <ligand>
        <name>ATP</name>
        <dbReference type="ChEBI" id="CHEBI:30616"/>
    </ligand>
</feature>
<feature type="site" description="Transition state stabilizer; for 3'-phosphoesterase activity" evidence="9">
    <location>
        <position position="84"/>
    </location>
</feature>
<feature type="mutagenesis site" description="77% ribonuclease activity, loss of 3'-phosphatase activity (in PE domain)." evidence="5">
    <original>R</original>
    <variation>A</variation>
    <location>
        <position position="14"/>
    </location>
</feature>
<feature type="mutagenesis site" description="3% 3'-phosphatase activity (in PE domain)." evidence="5">
    <original>D</original>
    <variation>A</variation>
    <location>
        <position position="15"/>
    </location>
</feature>
<feature type="mutagenesis site" description="Loss of 3'-phosphatase activity (in PE domain)." evidence="5">
    <original>E</original>
    <variation>A</variation>
    <location>
        <position position="21"/>
    </location>
</feature>
<feature type="mutagenesis site" description="41% ribonuclease activity, 7% 3'-phosphatase activity (in PE domain)." evidence="5">
    <original>Q</original>
    <variation>A</variation>
    <location>
        <position position="40"/>
    </location>
</feature>
<feature type="mutagenesis site" description="Loss of ribonuclease and 3'-phosphatase activity (in PE domain)." evidence="5">
    <original>H</original>
    <variation>A</variation>
    <location>
        <position position="42"/>
    </location>
</feature>
<feature type="mutagenesis site" description="16% ribonuclease activity, 20% 3'-phosphatase activity (in PE domain)." evidence="5">
    <original>R</original>
    <variation>A</variation>
    <location>
        <position position="46"/>
    </location>
</feature>
<feature type="mutagenesis site" description="Loss of ribonuclease and 3'-phosphatase activity (in PE domain)." evidence="5">
    <original>H</original>
    <variation>A</variation>
    <location>
        <position position="48"/>
    </location>
</feature>
<feature type="mutagenesis site" description="Loss of nuclease and 3'-phosphatase activity (in PE domain)." evidence="4">
    <original>D</original>
    <variation>A</variation>
    <location>
        <position position="50"/>
    </location>
</feature>
<feature type="mutagenesis site" description="Loss of nuclease and 3'-phosphatase activity (in PE domain)." evidence="4">
    <original>R</original>
    <variation>A</variation>
    <location>
        <position position="52"/>
    </location>
</feature>
<feature type="mutagenesis site" description="Nearly wild-type nuclease and 3'-phosphatase activity (in PE domain)." evidence="4">
    <original>E</original>
    <variation>A</variation>
    <location>
        <position position="54"/>
    </location>
</feature>
<feature type="mutagenesis site" description="3% ribonuclease activity, 28% 3'-phosphatase activity (in PE domain)." evidence="5">
    <original>K</original>
    <variation>A</variation>
    <location>
        <position position="66"/>
    </location>
</feature>
<feature type="mutagenesis site" description="1% ribonuclease activity, 16% 3'-phosphatase activity (in PE domain)." evidence="5">
    <original>R</original>
    <variation>A</variation>
    <location>
        <position position="76"/>
    </location>
</feature>
<feature type="mutagenesis site" description="Selective loss of 3'-phosphatase activity (in PE domain)." evidence="4">
    <original>E</original>
    <variation>A</variation>
    <location>
        <position position="82"/>
    </location>
</feature>
<feature type="mutagenesis site" description="57% ribonuclease activity, 50% 3'-phosphatase activity (in PE domain)." evidence="5">
    <original>D</original>
    <variation>A</variation>
    <location>
        <position position="83"/>
    </location>
</feature>
<feature type="mutagenesis site" description="Loss of nuclease and 3'-phosphatase activity (in PE domain)." evidence="4">
    <original>H</original>
    <variation>A</variation>
    <location>
        <position position="84"/>
    </location>
</feature>
<feature type="mutagenesis site" description="7% ribonuclease activity, loss of 3'-phosphatase activity (in PE domain)." evidence="5">
    <original>Y</original>
    <variation>A</variation>
    <location>
        <position position="88"/>
    </location>
</feature>
<feature type="mutagenesis site" description="5'-phosphate at distal end of gap no longer advantageous for rNTP or dNTP addition (in Pol domain)." evidence="7">
    <original>HPQRLIDPSIQASK</original>
    <variation>APQALIDPSIQASA</variation>
    <location>
        <begin position="553"/>
        <end position="566"/>
    </location>
</feature>
<feature type="mutagenesis site" description="Addition of rNTP to gapped molecule decreases to 1 or 2 nucleotides, dNTP addition decreased, 5'-phosphate at distal end of gap no longer advantageous (in Pol domain)." evidence="7">
    <original>HPQRLIDPSIQASK</original>
    <variation>APQRLIDPSIQASA</variation>
    <location>
        <begin position="553"/>
        <end position="566"/>
    </location>
</feature>
<feature type="mutagenesis site" description="Wild-type gap closing by rNTP or dNTP addition (in Pol domain)." evidence="7">
    <original>H</original>
    <variation>A</variation>
    <location>
        <position position="553"/>
    </location>
</feature>
<feature type="mutagenesis site" description="Decreases gap closing efficiency by rNTP, wild-type by dNTP (in Pol domain)." evidence="7">
    <original>R</original>
    <variation>A</variation>
    <location>
        <position position="556"/>
    </location>
</feature>
<feature type="mutagenesis site" description="No change in dNTP addition to gapped molecule, 5'-phosphate at distal of the gap no longer advantageous for rNTP addition (in Pol domain)." evidence="7">
    <original>K</original>
    <variation>A</variation>
    <location>
        <position position="566"/>
    </location>
</feature>
<feature type="mutagenesis site" description="Last nucleotide rarely added during gap closing for dNTP or rNTP addition, (in Pol domain). Stacks a DNA template base." evidence="7">
    <original>F</original>
    <variation>A</variation>
    <location>
        <position position="603"/>
    </location>
</feature>
<feature type="mutagenesis site" description="Nearly complete loss of templated dNTP or rNTP addition (in Pol domain)." evidence="6">
    <original>F</original>
    <variation>A</variation>
    <location>
        <position position="604"/>
    </location>
</feature>
<feature type="mutagenesis site" description="Loss of templated and non-templated DNA synthesis (in Pol domain)." evidence="3">
    <original>DLD</original>
    <variation>ALA</variation>
    <location>
        <begin position="669"/>
        <end position="671"/>
    </location>
</feature>
<feature type="mutagenesis site" description="Loss of templated DNA synthesis (in Pol domain)." evidence="6">
    <original>D</original>
    <variation>A</variation>
    <variation>N</variation>
    <location>
        <position position="669"/>
    </location>
</feature>
<feature type="mutagenesis site" description="Partial loss of templated DNA synthesis (in Pol domain)." evidence="6">
    <original>D</original>
    <variation>E</variation>
    <location>
        <position position="669"/>
    </location>
</feature>
<feature type="mutagenesis site" description="Loss of templated DNA synthesis (in Pol domain)." evidence="6">
    <original>D</original>
    <variation>A</variation>
    <variation>E</variation>
    <variation>N</variation>
    <location>
        <position position="671"/>
    </location>
</feature>
<feature type="mutagenesis site" description="Loss of templated DNA synthesis (in Pol domain)." evidence="6">
    <original>H</original>
    <variation>A</variation>
    <location>
        <position position="710"/>
    </location>
</feature>
<feature type="mutagenesis site" description="Partial loss of templated DNA synthesis (in Pol domain)." evidence="6">
    <original>H</original>
    <variation>N</variation>
    <location>
        <position position="710"/>
    </location>
</feature>
<feature type="mutagenesis site" description="Nearly wild-type templated DNA synthesis (in Pol domain)." evidence="6">
    <original>H</original>
    <variation>Q</variation>
    <location>
        <position position="710"/>
    </location>
</feature>
<feature type="mutagenesis site" description="Loss of templated DNA synthesis (in Pol domain)." evidence="6">
    <original>R</original>
    <variation>A</variation>
    <variation>Q</variation>
    <location>
        <position position="752"/>
    </location>
</feature>
<feature type="mutagenesis site" description="Partial loss of templated DNA synthesis (in Pol domain)." evidence="6">
    <original>R</original>
    <variation>K</variation>
    <location>
        <position position="752"/>
    </location>
</feature>
<feature type="mutagenesis site" description="Loss of templated DNA synthesis (in Pol domain)." evidence="6">
    <original>D</original>
    <variation>A</variation>
    <variation>N</variation>
    <location>
        <position position="759"/>
    </location>
</feature>
<feature type="mutagenesis site" description="Partial loss of templated DNA synthesis (in Pol domain)." evidence="6">
    <original>D</original>
    <variation>E</variation>
    <location>
        <position position="759"/>
    </location>
</feature>
<feature type="mutagenesis site" description="Loss of templated DNA synthesis (in Pol domain)." evidence="6">
    <original>R</original>
    <variation>A</variation>
    <location>
        <position position="776"/>
    </location>
</feature>
<feature type="mutagenesis site" description="Nearly wild-type templated DNA synthesis (in Pol domain)." evidence="6">
    <original>R</original>
    <variation>K</variation>
    <location>
        <position position="776"/>
    </location>
</feature>
<feature type="mutagenesis site" description="Partial loss of templated DNA synthesis (in Pol domain)." evidence="6">
    <original>R</original>
    <variation>Q</variation>
    <location>
        <position position="776"/>
    </location>
</feature>
<feature type="mutagenesis site" description="Nearly wild-type templated dNTP or rNTP addition (in Pol domain)." evidence="6">
    <original>R</original>
    <variation>A</variation>
    <location>
        <position position="778"/>
    </location>
</feature>
<feature type="strand" evidence="16">
    <location>
        <begin position="35"/>
        <end position="55"/>
    </location>
</feature>
<feature type="strand" evidence="16">
    <location>
        <begin position="58"/>
        <end position="64"/>
    </location>
</feature>
<feature type="strand" evidence="15">
    <location>
        <begin position="72"/>
        <end position="74"/>
    </location>
</feature>
<feature type="strand" evidence="16">
    <location>
        <begin position="76"/>
        <end position="84"/>
    </location>
</feature>
<feature type="helix" evidence="16">
    <location>
        <begin position="86"/>
        <end position="90"/>
    </location>
</feature>
<feature type="strand" evidence="15">
    <location>
        <begin position="91"/>
        <end position="95"/>
    </location>
</feature>
<feature type="turn" evidence="15">
    <location>
        <begin position="97"/>
        <end position="100"/>
    </location>
</feature>
<feature type="strand" evidence="16">
    <location>
        <begin position="104"/>
        <end position="117"/>
    </location>
</feature>
<feature type="helix" evidence="16">
    <location>
        <begin position="119"/>
        <end position="125"/>
    </location>
</feature>
<feature type="strand" evidence="16">
    <location>
        <begin position="127"/>
        <end position="136"/>
    </location>
</feature>
<feature type="strand" evidence="16">
    <location>
        <begin position="138"/>
        <end position="145"/>
    </location>
</feature>
<feature type="strand" evidence="15">
    <location>
        <begin position="148"/>
        <end position="153"/>
    </location>
</feature>
<feature type="strand" evidence="16">
    <location>
        <begin position="154"/>
        <end position="159"/>
    </location>
</feature>
<feature type="turn" evidence="16">
    <location>
        <begin position="168"/>
        <end position="170"/>
    </location>
</feature>
<feature type="helix" evidence="16">
    <location>
        <begin position="173"/>
        <end position="176"/>
    </location>
</feature>
<feature type="turn" evidence="16">
    <location>
        <begin position="181"/>
        <end position="183"/>
    </location>
</feature>
<feature type="turn" evidence="14">
    <location>
        <begin position="544"/>
        <end position="548"/>
    </location>
</feature>
<feature type="strand" evidence="14">
    <location>
        <begin position="556"/>
        <end position="559"/>
    </location>
</feature>
<feature type="helix" evidence="14">
    <location>
        <begin position="560"/>
        <end position="562"/>
    </location>
</feature>
<feature type="helix" evidence="14">
    <location>
        <begin position="566"/>
        <end position="575"/>
    </location>
</feature>
<feature type="helix" evidence="14">
    <location>
        <begin position="577"/>
        <end position="584"/>
    </location>
</feature>
<feature type="strand" evidence="14">
    <location>
        <begin position="587"/>
        <end position="593"/>
    </location>
</feature>
<feature type="strand" evidence="14">
    <location>
        <begin position="603"/>
        <end position="605"/>
    </location>
</feature>
<feature type="helix" evidence="14">
    <location>
        <begin position="621"/>
        <end position="623"/>
    </location>
</feature>
<feature type="strand" evidence="14">
    <location>
        <begin position="630"/>
        <end position="632"/>
    </location>
</feature>
<feature type="helix" evidence="14">
    <location>
        <begin position="636"/>
        <end position="644"/>
    </location>
</feature>
<feature type="strand" evidence="14">
    <location>
        <begin position="647"/>
        <end position="652"/>
    </location>
</feature>
<feature type="strand" evidence="14">
    <location>
        <begin position="664"/>
        <end position="672"/>
    </location>
</feature>
<feature type="helix" evidence="14">
    <location>
        <begin position="678"/>
        <end position="695"/>
    </location>
</feature>
<feature type="strand" evidence="14">
    <location>
        <begin position="700"/>
        <end position="703"/>
    </location>
</feature>
<feature type="strand" evidence="14">
    <location>
        <begin position="705"/>
        <end position="714"/>
    </location>
</feature>
<feature type="helix" evidence="14">
    <location>
        <begin position="721"/>
        <end position="738"/>
    </location>
</feature>
<feature type="turn" evidence="14">
    <location>
        <begin position="740"/>
        <end position="742"/>
    </location>
</feature>
<feature type="helix" evidence="14">
    <location>
        <begin position="749"/>
        <end position="751"/>
    </location>
</feature>
<feature type="strand" evidence="14">
    <location>
        <begin position="755"/>
        <end position="759"/>
    </location>
</feature>
<feature type="helix" evidence="14">
    <location>
        <begin position="761"/>
        <end position="763"/>
    </location>
</feature>
<feature type="helix" evidence="14">
    <location>
        <begin position="789"/>
        <end position="794"/>
    </location>
</feature>
<feature type="turn" evidence="14">
    <location>
        <begin position="803"/>
        <end position="805"/>
    </location>
</feature>
<feature type="helix" evidence="14">
    <location>
        <begin position="806"/>
        <end position="813"/>
    </location>
</feature>
<feature type="turn" evidence="14">
    <location>
        <begin position="818"/>
        <end position="824"/>
    </location>
</feature>
<feature type="helix" evidence="14">
    <location>
        <begin position="831"/>
        <end position="836"/>
    </location>
</feature>